<comment type="function">
    <text evidence="1">Catalyzes the acyloin condensation reaction between C atoms 2 and 3 of pyruvate and glyceraldehyde 3-phosphate to yield 1-deoxy-D-xylulose-5-phosphate (DXP).</text>
</comment>
<comment type="catalytic activity">
    <reaction evidence="1">
        <text>D-glyceraldehyde 3-phosphate + pyruvate + H(+) = 1-deoxy-D-xylulose 5-phosphate + CO2</text>
        <dbReference type="Rhea" id="RHEA:12605"/>
        <dbReference type="ChEBI" id="CHEBI:15361"/>
        <dbReference type="ChEBI" id="CHEBI:15378"/>
        <dbReference type="ChEBI" id="CHEBI:16526"/>
        <dbReference type="ChEBI" id="CHEBI:57792"/>
        <dbReference type="ChEBI" id="CHEBI:59776"/>
        <dbReference type="EC" id="2.2.1.7"/>
    </reaction>
</comment>
<comment type="cofactor">
    <cofactor evidence="1">
        <name>Mg(2+)</name>
        <dbReference type="ChEBI" id="CHEBI:18420"/>
    </cofactor>
    <text evidence="1">Binds 1 Mg(2+) ion per subunit.</text>
</comment>
<comment type="cofactor">
    <cofactor evidence="1">
        <name>thiamine diphosphate</name>
        <dbReference type="ChEBI" id="CHEBI:58937"/>
    </cofactor>
    <text evidence="1">Binds 1 thiamine pyrophosphate per subunit.</text>
</comment>
<comment type="pathway">
    <text evidence="1">Metabolic intermediate biosynthesis; 1-deoxy-D-xylulose 5-phosphate biosynthesis; 1-deoxy-D-xylulose 5-phosphate from D-glyceraldehyde 3-phosphate and pyruvate: step 1/1.</text>
</comment>
<comment type="subunit">
    <text evidence="1">Homodimer.</text>
</comment>
<comment type="similarity">
    <text evidence="1">Belongs to the transketolase family. DXPS subfamily.</text>
</comment>
<name>DXS_TROWT</name>
<keyword id="KW-0414">Isoprene biosynthesis</keyword>
<keyword id="KW-0460">Magnesium</keyword>
<keyword id="KW-0479">Metal-binding</keyword>
<keyword id="KW-1185">Reference proteome</keyword>
<keyword id="KW-0784">Thiamine biosynthesis</keyword>
<keyword id="KW-0786">Thiamine pyrophosphate</keyword>
<keyword id="KW-0808">Transferase</keyword>
<organism>
    <name type="scientific">Tropheryma whipplei (strain Twist)</name>
    <name type="common">Whipple's bacillus</name>
    <dbReference type="NCBI Taxonomy" id="203267"/>
    <lineage>
        <taxon>Bacteria</taxon>
        <taxon>Bacillati</taxon>
        <taxon>Actinomycetota</taxon>
        <taxon>Actinomycetes</taxon>
        <taxon>Micrococcales</taxon>
        <taxon>Tropherymataceae</taxon>
        <taxon>Tropheryma</taxon>
    </lineage>
</organism>
<protein>
    <recommendedName>
        <fullName evidence="1">1-deoxy-D-xylulose-5-phosphate synthase</fullName>
        <ecNumber evidence="1">2.2.1.7</ecNumber>
    </recommendedName>
    <alternativeName>
        <fullName evidence="1">1-deoxyxylulose-5-phosphate synthase</fullName>
        <shortName evidence="1">DXP synthase</shortName>
        <shortName evidence="1">DXPS</shortName>
    </alternativeName>
</protein>
<proteinExistence type="inferred from homology"/>
<gene>
    <name evidence="1" type="primary">dxs</name>
    <name type="ordered locus">TWT_484</name>
</gene>
<accession>Q83G46</accession>
<feature type="chain" id="PRO_0000189168" description="1-deoxy-D-xylulose-5-phosphate synthase">
    <location>
        <begin position="1"/>
        <end position="629"/>
    </location>
</feature>
<feature type="binding site" evidence="1">
    <location>
        <position position="79"/>
    </location>
    <ligand>
        <name>thiamine diphosphate</name>
        <dbReference type="ChEBI" id="CHEBI:58937"/>
    </ligand>
</feature>
<feature type="binding site" evidence="1">
    <location>
        <begin position="119"/>
        <end position="121"/>
    </location>
    <ligand>
        <name>thiamine diphosphate</name>
        <dbReference type="ChEBI" id="CHEBI:58937"/>
    </ligand>
</feature>
<feature type="binding site" evidence="1">
    <location>
        <position position="150"/>
    </location>
    <ligand>
        <name>Mg(2+)</name>
        <dbReference type="ChEBI" id="CHEBI:18420"/>
    </ligand>
</feature>
<feature type="binding site" evidence="1">
    <location>
        <begin position="151"/>
        <end position="152"/>
    </location>
    <ligand>
        <name>thiamine diphosphate</name>
        <dbReference type="ChEBI" id="CHEBI:58937"/>
    </ligand>
</feature>
<feature type="binding site" evidence="1">
    <location>
        <position position="180"/>
    </location>
    <ligand>
        <name>Mg(2+)</name>
        <dbReference type="ChEBI" id="CHEBI:18420"/>
    </ligand>
</feature>
<feature type="binding site" evidence="1">
    <location>
        <position position="180"/>
    </location>
    <ligand>
        <name>thiamine diphosphate</name>
        <dbReference type="ChEBI" id="CHEBI:58937"/>
    </ligand>
</feature>
<feature type="binding site" evidence="1">
    <location>
        <position position="292"/>
    </location>
    <ligand>
        <name>thiamine diphosphate</name>
        <dbReference type="ChEBI" id="CHEBI:58937"/>
    </ligand>
</feature>
<feature type="binding site" evidence="1">
    <location>
        <position position="377"/>
    </location>
    <ligand>
        <name>thiamine diphosphate</name>
        <dbReference type="ChEBI" id="CHEBI:58937"/>
    </ligand>
</feature>
<evidence type="ECO:0000255" key="1">
    <source>
        <dbReference type="HAMAP-Rule" id="MF_00315"/>
    </source>
</evidence>
<sequence>MCTKRQYGLLESIRSPRDLDSFTPHQLDELECQVRDFLIQSVAKTGGHLGSNLGVVELSIALHRSFRSPEDCIIFDVGHQCYVHKLITGRHDFKALRCKNGLSGYPSRHESNHDIVENSHASAALSWADGVSRARTLLGNDNYVIAVVGDGSLTGGMCWEALNNISDDNNRRLVIVVNDNGRSYARTIGGIARFLNAVRASKSYLWLRESSEAVFSHMGSPGRRLYQGIRGAIHGFLSRFSSSNKLFSNLDIRYLGPINGHNRKALEKAFKQAKQYARPIIVHVITEKGHGYPPALEDALDCLHTVGVIDPSTGKSASVQGQVRQDTWTGVFGEELLRLAESNTNIVAVTAAMLHPTGLSMFAEKFPHRVFDVGIAEQHAVASAAGLAYEGLHPVVAIYSTFMNRAFDQVMMDVALHGAPVTFVLDRAGITGPDGASHHGIWDLSLLRIVPGIKLYAPRDASTLRNTLALVCSEDCPTAIRFPRGSVCDDLPALRSLDDGIDVLYGSCDREDIVIVAIGVMAHACVRAAQLLAESGIESTVINPVCFWPLHRQVLARVSKAKLVVLAEEGAKSPGLGDYIAGRRLLEFVIPGDFQPQGSRDELLDAIGLNGEHIARKIKARFNQIINCV</sequence>
<reference key="1">
    <citation type="journal article" date="2003" name="Genome Res.">
        <title>Tropheryma whipplei twist: a human pathogenic Actinobacteria with a reduced genome.</title>
        <authorList>
            <person name="Raoult D."/>
            <person name="Ogata H."/>
            <person name="Audic S."/>
            <person name="Robert C."/>
            <person name="Suhre K."/>
            <person name="Drancourt M."/>
            <person name="Claverie J.-M."/>
        </authorList>
    </citation>
    <scope>NUCLEOTIDE SEQUENCE [LARGE SCALE GENOMIC DNA]</scope>
    <source>
        <strain>Twist</strain>
    </source>
</reference>
<dbReference type="EC" id="2.2.1.7" evidence="1"/>
<dbReference type="EMBL" id="AE014184">
    <property type="protein sequence ID" value="AAO44581.1"/>
    <property type="molecule type" value="Genomic_DNA"/>
</dbReference>
<dbReference type="RefSeq" id="WP_011096234.1">
    <property type="nucleotide sequence ID" value="NC_004572.3"/>
</dbReference>
<dbReference type="SMR" id="Q83G46"/>
<dbReference type="STRING" id="203267.TWT_484"/>
<dbReference type="GeneID" id="67388054"/>
<dbReference type="KEGG" id="twh:TWT_484"/>
<dbReference type="eggNOG" id="COG1154">
    <property type="taxonomic scope" value="Bacteria"/>
</dbReference>
<dbReference type="HOGENOM" id="CLU_009227_1_4_11"/>
<dbReference type="OrthoDB" id="9803371at2"/>
<dbReference type="UniPathway" id="UPA00064">
    <property type="reaction ID" value="UER00091"/>
</dbReference>
<dbReference type="Proteomes" id="UP000002200">
    <property type="component" value="Chromosome"/>
</dbReference>
<dbReference type="GO" id="GO:0005829">
    <property type="term" value="C:cytosol"/>
    <property type="evidence" value="ECO:0007669"/>
    <property type="project" value="TreeGrafter"/>
</dbReference>
<dbReference type="GO" id="GO:0008661">
    <property type="term" value="F:1-deoxy-D-xylulose-5-phosphate synthase activity"/>
    <property type="evidence" value="ECO:0007669"/>
    <property type="project" value="UniProtKB-UniRule"/>
</dbReference>
<dbReference type="GO" id="GO:0000287">
    <property type="term" value="F:magnesium ion binding"/>
    <property type="evidence" value="ECO:0007669"/>
    <property type="project" value="UniProtKB-UniRule"/>
</dbReference>
<dbReference type="GO" id="GO:0030976">
    <property type="term" value="F:thiamine pyrophosphate binding"/>
    <property type="evidence" value="ECO:0007669"/>
    <property type="project" value="UniProtKB-UniRule"/>
</dbReference>
<dbReference type="GO" id="GO:0052865">
    <property type="term" value="P:1-deoxy-D-xylulose 5-phosphate biosynthetic process"/>
    <property type="evidence" value="ECO:0007669"/>
    <property type="project" value="UniProtKB-UniPathway"/>
</dbReference>
<dbReference type="GO" id="GO:0019288">
    <property type="term" value="P:isopentenyl diphosphate biosynthetic process, methylerythritol 4-phosphate pathway"/>
    <property type="evidence" value="ECO:0007669"/>
    <property type="project" value="TreeGrafter"/>
</dbReference>
<dbReference type="GO" id="GO:0016114">
    <property type="term" value="P:terpenoid biosynthetic process"/>
    <property type="evidence" value="ECO:0007669"/>
    <property type="project" value="UniProtKB-UniRule"/>
</dbReference>
<dbReference type="GO" id="GO:0009228">
    <property type="term" value="P:thiamine biosynthetic process"/>
    <property type="evidence" value="ECO:0007669"/>
    <property type="project" value="UniProtKB-UniRule"/>
</dbReference>
<dbReference type="CDD" id="cd02007">
    <property type="entry name" value="TPP_DXS"/>
    <property type="match status" value="1"/>
</dbReference>
<dbReference type="CDD" id="cd07033">
    <property type="entry name" value="TPP_PYR_DXS_TK_like"/>
    <property type="match status" value="1"/>
</dbReference>
<dbReference type="FunFam" id="3.40.50.970:FF:000005">
    <property type="entry name" value="1-deoxy-D-xylulose-5-phosphate synthase"/>
    <property type="match status" value="1"/>
</dbReference>
<dbReference type="Gene3D" id="3.40.50.920">
    <property type="match status" value="1"/>
</dbReference>
<dbReference type="Gene3D" id="3.40.50.970">
    <property type="match status" value="2"/>
</dbReference>
<dbReference type="HAMAP" id="MF_00315">
    <property type="entry name" value="DXP_synth"/>
    <property type="match status" value="1"/>
</dbReference>
<dbReference type="InterPro" id="IPR005477">
    <property type="entry name" value="Dxylulose-5-P_synthase"/>
</dbReference>
<dbReference type="InterPro" id="IPR029061">
    <property type="entry name" value="THDP-binding"/>
</dbReference>
<dbReference type="InterPro" id="IPR009014">
    <property type="entry name" value="Transketo_C/PFOR_II"/>
</dbReference>
<dbReference type="InterPro" id="IPR005475">
    <property type="entry name" value="Transketolase-like_Pyr-bd"/>
</dbReference>
<dbReference type="InterPro" id="IPR020826">
    <property type="entry name" value="Transketolase_BS"/>
</dbReference>
<dbReference type="InterPro" id="IPR033248">
    <property type="entry name" value="Transketolase_C"/>
</dbReference>
<dbReference type="InterPro" id="IPR049557">
    <property type="entry name" value="Transketolase_CS"/>
</dbReference>
<dbReference type="NCBIfam" id="TIGR00204">
    <property type="entry name" value="dxs"/>
    <property type="match status" value="1"/>
</dbReference>
<dbReference type="NCBIfam" id="NF003933">
    <property type="entry name" value="PRK05444.2-2"/>
    <property type="match status" value="1"/>
</dbReference>
<dbReference type="PANTHER" id="PTHR43322">
    <property type="entry name" value="1-D-DEOXYXYLULOSE 5-PHOSPHATE SYNTHASE-RELATED"/>
    <property type="match status" value="1"/>
</dbReference>
<dbReference type="PANTHER" id="PTHR43322:SF5">
    <property type="entry name" value="1-DEOXY-D-XYLULOSE-5-PHOSPHATE SYNTHASE, CHLOROPLASTIC"/>
    <property type="match status" value="1"/>
</dbReference>
<dbReference type="Pfam" id="PF13292">
    <property type="entry name" value="DXP_synthase_N"/>
    <property type="match status" value="1"/>
</dbReference>
<dbReference type="Pfam" id="PF02779">
    <property type="entry name" value="Transket_pyr"/>
    <property type="match status" value="1"/>
</dbReference>
<dbReference type="Pfam" id="PF02780">
    <property type="entry name" value="Transketolase_C"/>
    <property type="match status" value="1"/>
</dbReference>
<dbReference type="SMART" id="SM00861">
    <property type="entry name" value="Transket_pyr"/>
    <property type="match status" value="1"/>
</dbReference>
<dbReference type="SUPFAM" id="SSF52518">
    <property type="entry name" value="Thiamin diphosphate-binding fold (THDP-binding)"/>
    <property type="match status" value="2"/>
</dbReference>
<dbReference type="SUPFAM" id="SSF52922">
    <property type="entry name" value="TK C-terminal domain-like"/>
    <property type="match status" value="1"/>
</dbReference>
<dbReference type="PROSITE" id="PS00801">
    <property type="entry name" value="TRANSKETOLASE_1"/>
    <property type="match status" value="1"/>
</dbReference>
<dbReference type="PROSITE" id="PS00802">
    <property type="entry name" value="TRANSKETOLASE_2"/>
    <property type="match status" value="1"/>
</dbReference>